<keyword id="KW-0007">Acetylation</keyword>
<keyword id="KW-0963">Cytoplasm</keyword>
<keyword id="KW-0903">Direct protein sequencing</keyword>
<keyword id="KW-0324">Glycolysis</keyword>
<keyword id="KW-0456">Lyase</keyword>
<keyword id="KW-1185">Reference proteome</keyword>
<keyword id="KW-0704">Schiff base</keyword>
<accession>P0A991</accession>
<accession>P71295</accession>
<accession>P76416</accession>
<accession>Q2MAX2</accession>
<gene>
    <name type="primary">fbaB</name>
    <name type="synonym">dhnA</name>
    <name type="ordered locus">b2097</name>
    <name type="ordered locus">JW5344</name>
</gene>
<name>ALF1_ECOLI</name>
<dbReference type="EC" id="4.1.2.13" evidence="2"/>
<dbReference type="EMBL" id="U73760">
    <property type="protein sequence ID" value="AAB18249.1"/>
    <property type="status" value="ALT_INIT"/>
    <property type="molecule type" value="Genomic_DNA"/>
</dbReference>
<dbReference type="EMBL" id="U00096">
    <property type="protein sequence ID" value="AAC75158.2"/>
    <property type="molecule type" value="Genomic_DNA"/>
</dbReference>
<dbReference type="EMBL" id="AP009048">
    <property type="protein sequence ID" value="BAE76584.1"/>
    <property type="molecule type" value="Genomic_DNA"/>
</dbReference>
<dbReference type="RefSeq" id="NP_416600.4">
    <property type="nucleotide sequence ID" value="NC_000913.3"/>
</dbReference>
<dbReference type="RefSeq" id="WP_000129551.1">
    <property type="nucleotide sequence ID" value="NZ_STEB01000002.1"/>
</dbReference>
<dbReference type="SMR" id="P0A991"/>
<dbReference type="BioGRID" id="4261525">
    <property type="interactions" value="7"/>
</dbReference>
<dbReference type="BioGRID" id="850978">
    <property type="interactions" value="1"/>
</dbReference>
<dbReference type="DIP" id="DIP-36197N"/>
<dbReference type="FunCoup" id="P0A991">
    <property type="interactions" value="373"/>
</dbReference>
<dbReference type="IntAct" id="P0A991">
    <property type="interactions" value="5"/>
</dbReference>
<dbReference type="STRING" id="511145.b2097"/>
<dbReference type="iPTMnet" id="P0A991"/>
<dbReference type="jPOST" id="P0A991"/>
<dbReference type="PaxDb" id="511145-b2097"/>
<dbReference type="EnsemblBacteria" id="AAC75158">
    <property type="protein sequence ID" value="AAC75158"/>
    <property type="gene ID" value="b2097"/>
</dbReference>
<dbReference type="GeneID" id="75205967"/>
<dbReference type="GeneID" id="946632"/>
<dbReference type="KEGG" id="ecj:JW5344"/>
<dbReference type="KEGG" id="eco:b2097"/>
<dbReference type="KEGG" id="ecoc:C3026_11770"/>
<dbReference type="PATRIC" id="fig|1411691.4.peg.150"/>
<dbReference type="EchoBASE" id="EB3815"/>
<dbReference type="eggNOG" id="COG1830">
    <property type="taxonomic scope" value="Bacteria"/>
</dbReference>
<dbReference type="HOGENOM" id="CLU_057069_0_0_6"/>
<dbReference type="InParanoid" id="P0A991"/>
<dbReference type="OMA" id="RYQVLNC"/>
<dbReference type="OrthoDB" id="9769559at2"/>
<dbReference type="PhylomeDB" id="P0A991"/>
<dbReference type="BioCyc" id="EcoCyc:FRUCBISALD-CLASSI-MONOMER"/>
<dbReference type="BioCyc" id="MetaCyc:FRUCBISALD-CLASSI-MONOMER"/>
<dbReference type="SABIO-RK" id="P0A991"/>
<dbReference type="PRO" id="PR:P0A991"/>
<dbReference type="Proteomes" id="UP000000625">
    <property type="component" value="Chromosome"/>
</dbReference>
<dbReference type="GO" id="GO:0005829">
    <property type="term" value="C:cytosol"/>
    <property type="evidence" value="ECO:0000314"/>
    <property type="project" value="EcoCyc"/>
</dbReference>
<dbReference type="GO" id="GO:0016020">
    <property type="term" value="C:membrane"/>
    <property type="evidence" value="ECO:0007005"/>
    <property type="project" value="UniProtKB"/>
</dbReference>
<dbReference type="GO" id="GO:0004332">
    <property type="term" value="F:fructose-bisphosphate aldolase activity"/>
    <property type="evidence" value="ECO:0000314"/>
    <property type="project" value="EcoCyc"/>
</dbReference>
<dbReference type="GO" id="GO:0042802">
    <property type="term" value="F:identical protein binding"/>
    <property type="evidence" value="ECO:0000353"/>
    <property type="project" value="IntAct"/>
</dbReference>
<dbReference type="GO" id="GO:0006096">
    <property type="term" value="P:glycolytic process"/>
    <property type="evidence" value="ECO:0007669"/>
    <property type="project" value="UniProtKB-KW"/>
</dbReference>
<dbReference type="CDD" id="cd00958">
    <property type="entry name" value="DhnA"/>
    <property type="match status" value="1"/>
</dbReference>
<dbReference type="FunFam" id="3.20.20.70:FF:000041">
    <property type="entry name" value="Fructose-bisphosphate aldolase class I"/>
    <property type="match status" value="1"/>
</dbReference>
<dbReference type="Gene3D" id="3.20.20.70">
    <property type="entry name" value="Aldolase class I"/>
    <property type="match status" value="1"/>
</dbReference>
<dbReference type="InterPro" id="IPR013785">
    <property type="entry name" value="Aldolase_TIM"/>
</dbReference>
<dbReference type="InterPro" id="IPR002915">
    <property type="entry name" value="DeoC/FbaB/LacD_aldolase"/>
</dbReference>
<dbReference type="InterPro" id="IPR050456">
    <property type="entry name" value="DeoC/FbaB_aldolase"/>
</dbReference>
<dbReference type="InterPro" id="IPR041720">
    <property type="entry name" value="FbaB-like"/>
</dbReference>
<dbReference type="NCBIfam" id="NF006706">
    <property type="entry name" value="PRK09250.1-3"/>
    <property type="match status" value="1"/>
</dbReference>
<dbReference type="NCBIfam" id="NF006707">
    <property type="entry name" value="PRK09250.1-4"/>
    <property type="match status" value="1"/>
</dbReference>
<dbReference type="PANTHER" id="PTHR47916">
    <property type="entry name" value="FRUCTOSE-BISPHOSPHATE ALDOLASE CLASS 1"/>
    <property type="match status" value="1"/>
</dbReference>
<dbReference type="PANTHER" id="PTHR47916:SF4">
    <property type="entry name" value="FRUCTOSE-BISPHOSPHATE ALDOLASE CLASS 1"/>
    <property type="match status" value="1"/>
</dbReference>
<dbReference type="Pfam" id="PF01791">
    <property type="entry name" value="DeoC"/>
    <property type="match status" value="1"/>
</dbReference>
<dbReference type="SMART" id="SM01133">
    <property type="entry name" value="DeoC"/>
    <property type="match status" value="1"/>
</dbReference>
<dbReference type="SUPFAM" id="SSF51569">
    <property type="entry name" value="Aldolase"/>
    <property type="match status" value="1"/>
</dbReference>
<proteinExistence type="evidence at protein level"/>
<feature type="initiator methionine" description="Removed" evidence="3">
    <location>
        <position position="1"/>
    </location>
</feature>
<feature type="chain" id="PRO_0000138939" description="Fructose-bisphosphate aldolase class 1">
    <location>
        <begin position="2"/>
        <end position="350"/>
    </location>
</feature>
<feature type="active site" description="Schiff-base intermediate with dihydroxyacetone-P" evidence="3">
    <location>
        <position position="237"/>
    </location>
</feature>
<feature type="modified residue" description="N6-acetyllysine" evidence="1">
    <location>
        <position position="208"/>
    </location>
</feature>
<feature type="modified residue" description="N6-acetyllysine" evidence="1">
    <location>
        <position position="262"/>
    </location>
</feature>
<feature type="mutagenesis site" description="Loss of activity." evidence="3">
    <original>K</original>
    <variation>A</variation>
    <location>
        <position position="237"/>
    </location>
</feature>
<feature type="mutagenesis site" description="No change in activity." evidence="3">
    <original>K</original>
    <variation>A</variation>
    <location>
        <position position="239"/>
    </location>
</feature>
<feature type="sequence conflict" description="In Ref. 1; AAB18249." evidence="4" ref="1">
    <original>L</original>
    <variation>V</variation>
    <location>
        <position position="192"/>
    </location>
</feature>
<feature type="sequence conflict" description="In Ref. 1; AAB18249." evidence="4" ref="1">
    <original>N</original>
    <variation>I</variation>
    <location>
        <position position="309"/>
    </location>
</feature>
<reference key="1">
    <citation type="submission" date="1996-10" db="EMBL/GenBank/DDBJ databases">
        <authorList>
            <person name="Close T.J."/>
            <person name="Choi D.W."/>
        </authorList>
    </citation>
    <scope>NUCLEOTIDE SEQUENCE [GENOMIC DNA]</scope>
    <source>
        <strain>K12 / W3110 / ATCC 27325 / DSM 5911</strain>
    </source>
</reference>
<reference key="2">
    <citation type="journal article" date="1997" name="Science">
        <title>The complete genome sequence of Escherichia coli K-12.</title>
        <authorList>
            <person name="Blattner F.R."/>
            <person name="Plunkett G. III"/>
            <person name="Bloch C.A."/>
            <person name="Perna N.T."/>
            <person name="Burland V."/>
            <person name="Riley M."/>
            <person name="Collado-Vides J."/>
            <person name="Glasner J.D."/>
            <person name="Rode C.K."/>
            <person name="Mayhew G.F."/>
            <person name="Gregor J."/>
            <person name="Davis N.W."/>
            <person name="Kirkpatrick H.A."/>
            <person name="Goeden M.A."/>
            <person name="Rose D.J."/>
            <person name="Mau B."/>
            <person name="Shao Y."/>
        </authorList>
    </citation>
    <scope>NUCLEOTIDE SEQUENCE [LARGE SCALE GENOMIC DNA]</scope>
    <source>
        <strain>K12 / MG1655 / ATCC 47076</strain>
    </source>
</reference>
<reference key="3">
    <citation type="journal article" date="2006" name="Mol. Syst. Biol.">
        <title>Highly accurate genome sequences of Escherichia coli K-12 strains MG1655 and W3110.</title>
        <authorList>
            <person name="Hayashi K."/>
            <person name="Morooka N."/>
            <person name="Yamamoto Y."/>
            <person name="Fujita K."/>
            <person name="Isono K."/>
            <person name="Choi S."/>
            <person name="Ohtsubo E."/>
            <person name="Baba T."/>
            <person name="Wanner B.L."/>
            <person name="Mori H."/>
            <person name="Horiuchi T."/>
        </authorList>
    </citation>
    <scope>NUCLEOTIDE SEQUENCE [LARGE SCALE GENOMIC DNA]</scope>
    <source>
        <strain>K12 / W3110 / ATCC 27325 / DSM 5911</strain>
    </source>
</reference>
<reference key="4">
    <citation type="journal article" date="1998" name="Biochem. J.">
        <title>The dhnA gene of Escherichia coli encodes a class I fructose bisphosphate aldolase.</title>
        <authorList>
            <person name="Thomson G.J."/>
            <person name="Howlett G.J."/>
            <person name="Ashcroft A.E."/>
            <person name="Berry A."/>
        </authorList>
    </citation>
    <scope>PROTEIN SEQUENCE OF 2-10</scope>
    <scope>MASS SPECTROMETRY</scope>
    <scope>SUBUNIT</scope>
    <scope>CATALYTIC ACTIVITY</scope>
    <scope>FUNCTION</scope>
    <scope>ACTIVE SITE</scope>
    <scope>BIOPHYSICOCHEMICAL PROPERTIES</scope>
    <scope>MUTAGENESIS OF LYS-237 AND LYS-239</scope>
</reference>
<reference key="5">
    <citation type="journal article" date="2009" name="Mol. Cell. Proteomics">
        <title>Lysine acetylation is a highly abundant and evolutionarily conserved modification in Escherichia coli.</title>
        <authorList>
            <person name="Zhang J."/>
            <person name="Sprung R."/>
            <person name="Pei J."/>
            <person name="Tan X."/>
            <person name="Kim S."/>
            <person name="Zhu H."/>
            <person name="Liu C.F."/>
            <person name="Grishin N.V."/>
            <person name="Zhao Y."/>
        </authorList>
    </citation>
    <scope>ACETYLATION [LARGE SCALE ANALYSIS] AT LYS-208 AND LYS-262</scope>
    <scope>IDENTIFICATION BY MASS SPECTROMETRY</scope>
    <source>
        <strain>K12 / JW1106</strain>
        <strain>K12 / MG1655 / ATCC 47076</strain>
    </source>
</reference>
<protein>
    <recommendedName>
        <fullName>Fructose-bisphosphate aldolase class 1</fullName>
        <ecNumber evidence="2">4.1.2.13</ecNumber>
    </recommendedName>
    <alternativeName>
        <fullName>Fructose-bisphosphate aldolase class I</fullName>
        <shortName>FBP aldolase</shortName>
    </alternativeName>
</protein>
<organism>
    <name type="scientific">Escherichia coli (strain K12)</name>
    <dbReference type="NCBI Taxonomy" id="83333"/>
    <lineage>
        <taxon>Bacteria</taxon>
        <taxon>Pseudomonadati</taxon>
        <taxon>Pseudomonadota</taxon>
        <taxon>Gammaproteobacteria</taxon>
        <taxon>Enterobacterales</taxon>
        <taxon>Enterobacteriaceae</taxon>
        <taxon>Escherichia</taxon>
    </lineage>
</organism>
<evidence type="ECO:0000269" key="1">
    <source>
    </source>
</evidence>
<evidence type="ECO:0000269" key="2">
    <source>
    </source>
</evidence>
<evidence type="ECO:0000269" key="3">
    <source>
    </source>
</evidence>
<evidence type="ECO:0000305" key="4"/>
<sequence>MTDIAQLLGKDADNLLQHRCMTIPSDQLYLPGHDYVDRVMIDNNRPPAVLRNMQTLYNTGRLAGTGYLSILPVDQGVEHSAGASFAANPLYFDPKNIVELAIEAGCNCVASTYGVLASVSRRYAHRIPFLVKLNHNETLSYPNTYDQTLYASVEQAFNMGAVAVGATIYFGSEESRRQIEEISAAFERAHELGMVTVLWAYLRNSAFKKDGVDYHVSADLTGQANHLAATIGADIVKQKMAENNGGYKAINYGYTDDRVYSKLTSENPIDLVRYQLANCYMGRAGLINSGGAAGGETDLSDAVRTAVINKRAGGMGLILGRKAFKKSMADGVKLINAVQDVYLDSKITIA</sequence>
<comment type="function">
    <text evidence="3">Catalyzes the reversible aldol condensation/cleavage reaction between glyceraldehyde 3-phosphate and dihydroxyacetone phosphate (DHAP) to yield fructose-bisphosphate (FBP).</text>
</comment>
<comment type="catalytic activity">
    <reaction evidence="3">
        <text>beta-D-fructose 1,6-bisphosphate = D-glyceraldehyde 3-phosphate + dihydroxyacetone phosphate</text>
        <dbReference type="Rhea" id="RHEA:14729"/>
        <dbReference type="ChEBI" id="CHEBI:32966"/>
        <dbReference type="ChEBI" id="CHEBI:57642"/>
        <dbReference type="ChEBI" id="CHEBI:59776"/>
        <dbReference type="EC" id="4.1.2.13"/>
    </reaction>
    <physiologicalReaction direction="left-to-right" evidence="3">
        <dbReference type="Rhea" id="RHEA:14730"/>
    </physiologicalReaction>
    <physiologicalReaction direction="right-to-left" evidence="3">
        <dbReference type="Rhea" id="RHEA:14731"/>
    </physiologicalReaction>
</comment>
<comment type="activity regulation">
    <text>Activated by citrate.</text>
</comment>
<comment type="biophysicochemical properties">
    <kinetics>
        <KM evidence="3">20 uM for FBP</KM>
    </kinetics>
</comment>
<comment type="subunit">
    <text evidence="3">Homooctamer or homodecamer.</text>
</comment>
<comment type="interaction">
    <interactant intactId="EBI-545269">
        <id>P0A991</id>
    </interactant>
    <interactant intactId="EBI-545269">
        <id>P0A991</id>
        <label>fbaB</label>
    </interactant>
    <organismsDiffer>false</organismsDiffer>
    <experiments>2</experiments>
</comment>
<comment type="subcellular location">
    <subcellularLocation>
        <location evidence="4">Cytoplasm</location>
    </subcellularLocation>
</comment>
<comment type="mass spectrometry"/>
<comment type="similarity">
    <text evidence="4">Belongs to the DeoC/FbaB aldolase family. FbaB subfamily.</text>
</comment>
<comment type="caution">
    <text evidence="4">Was originally (Ref.1) thought to be a dehydrin.</text>
</comment>
<comment type="sequence caution" evidence="4">
    <conflict type="erroneous initiation">
        <sequence resource="EMBL-CDS" id="AAB18249"/>
    </conflict>
    <text>Extended N-terminus.</text>
</comment>